<sequence length="63" mass="7045">MLKSASGALANVLKRSLVPAARVTAVVPLRRSHGGPVESDEEFDSRYEAFFNRKDIDGWEIRK</sequence>
<protein>
    <recommendedName>
        <fullName>Cytochrome c oxidase subunit 5A, mitochondrial</fullName>
    </recommendedName>
    <alternativeName>
        <fullName>Cytochrome c oxidase polypeptide Va</fullName>
    </alternativeName>
</protein>
<proteinExistence type="evidence at transcript level"/>
<accession>O61694</accession>
<dbReference type="EMBL" id="AF060794">
    <property type="protein sequence ID" value="AAC15761.1"/>
    <property type="molecule type" value="mRNA"/>
</dbReference>
<dbReference type="SMR" id="O61694"/>
<dbReference type="EnsemblMetazoa" id="XM_030176489.2">
    <property type="protein sequence ID" value="XP_030032349.1"/>
    <property type="gene ID" value="LOC115448887"/>
</dbReference>
<dbReference type="OrthoDB" id="5778907at2759"/>
<dbReference type="UniPathway" id="UPA00705"/>
<dbReference type="GO" id="GO:0005743">
    <property type="term" value="C:mitochondrial inner membrane"/>
    <property type="evidence" value="ECO:0007669"/>
    <property type="project" value="UniProtKB-SubCell"/>
</dbReference>
<dbReference type="GO" id="GO:0045277">
    <property type="term" value="C:respiratory chain complex IV"/>
    <property type="evidence" value="ECO:0007669"/>
    <property type="project" value="InterPro"/>
</dbReference>
<dbReference type="GO" id="GO:0046872">
    <property type="term" value="F:metal ion binding"/>
    <property type="evidence" value="ECO:0007669"/>
    <property type="project" value="UniProtKB-KW"/>
</dbReference>
<dbReference type="GO" id="GO:0006123">
    <property type="term" value="P:mitochondrial electron transport, cytochrome c to oxygen"/>
    <property type="evidence" value="ECO:0007669"/>
    <property type="project" value="InterPro"/>
</dbReference>
<dbReference type="Gene3D" id="1.25.40.40">
    <property type="entry name" value="Cytochrome c oxidase, subunit Va/VI"/>
    <property type="match status" value="1"/>
</dbReference>
<dbReference type="InterPro" id="IPR003204">
    <property type="entry name" value="Cyt_c_oxidase_su5A/6"/>
</dbReference>
<dbReference type="InterPro" id="IPR036545">
    <property type="entry name" value="Cyt_c_oxidase_su5A/6_sf"/>
</dbReference>
<dbReference type="Pfam" id="PF02284">
    <property type="entry name" value="COX5A"/>
    <property type="match status" value="1"/>
</dbReference>
<dbReference type="SUPFAM" id="SSF48479">
    <property type="entry name" value="Cytochrome c oxidase subunit E"/>
    <property type="match status" value="1"/>
</dbReference>
<gene>
    <name type="primary">COVA</name>
</gene>
<evidence type="ECO:0000250" key="1">
    <source>
        <dbReference type="UniProtKB" id="P00427"/>
    </source>
</evidence>
<evidence type="ECO:0000255" key="2"/>
<evidence type="ECO:0000305" key="3"/>
<name>COX5A_MANSE</name>
<feature type="transit peptide" description="Mitochondrion" evidence="2">
    <location>
        <begin position="1"/>
        <end status="unknown"/>
    </location>
</feature>
<feature type="chain" id="PRO_0000006105" description="Cytochrome c oxidase subunit 5A, mitochondrial">
    <location>
        <begin status="unknown"/>
        <end position="63" status="greater than"/>
    </location>
</feature>
<feature type="non-terminal residue">
    <location>
        <position position="63"/>
    </location>
</feature>
<comment type="function">
    <text evidence="1">Component of the cytochrome c oxidase, the last enzyme in the mitochondrial electron transport chain which drives oxidative phosphorylation. The respiratory chain contains 3 multisubunit complexes succinate dehydrogenase (complex II, CII), ubiquinol-cytochrome c oxidoreductase (cytochrome b-c1 complex, complex III, CIII) and cytochrome c oxidase (complex IV, CIV), that cooperate to transfer electrons derived from NADH and succinate to molecular oxygen, creating an electrochemical gradient over the inner membrane that drives transmembrane transport and the ATP synthase. Cytochrome c oxidase is the component of the respiratory chain that catalyzes the reduction of oxygen to water. Electrons originating from reduced cytochrome c in the intermembrane space (IMS) are transferred via the dinuclear copper A center (CU(A)) of subunit 2 and heme A of subunit 1 to the active site in subunit 1, a binuclear center (BNC) formed by heme A3 and copper B (CU(B)). The BNC reduces molecular oxygen to 2 water molecules using 4 electrons from cytochrome c in the IMS and 4 protons from the mitochondrial matrix.</text>
</comment>
<comment type="pathway">
    <text evidence="1">Energy metabolism; oxidative phosphorylation.</text>
</comment>
<comment type="subunit">
    <text evidence="1">Component of the cytochrome c oxidase (complex IV, CIV), a multisubunit enzyme composed of a catalytic core of 3 subunits and several supernumerary subunits. The complex exists as a monomer or a dimer and forms supercomplexes (SCs) in the inner mitochondrial membrane with ubiquinol-cytochrome c oxidoreductase (cytochrome b-c1 complex, complex III, CIII).</text>
</comment>
<comment type="subcellular location">
    <subcellularLocation>
        <location evidence="1">Mitochondrion inner membrane</location>
        <topology evidence="1">Peripheral membrane protein</topology>
        <orientation evidence="1">Matrix side</orientation>
    </subcellularLocation>
</comment>
<comment type="similarity">
    <text evidence="3">Belongs to the cytochrome c oxidase subunit 5A family.</text>
</comment>
<keyword id="KW-0349">Heme</keyword>
<keyword id="KW-0408">Iron</keyword>
<keyword id="KW-0472">Membrane</keyword>
<keyword id="KW-0479">Metal-binding</keyword>
<keyword id="KW-0496">Mitochondrion</keyword>
<keyword id="KW-0999">Mitochondrion inner membrane</keyword>
<keyword id="KW-0809">Transit peptide</keyword>
<organism>
    <name type="scientific">Manduca sexta</name>
    <name type="common">Tobacco hawkmoth</name>
    <name type="synonym">Tobacco hornworm</name>
    <dbReference type="NCBI Taxonomy" id="7130"/>
    <lineage>
        <taxon>Eukaryota</taxon>
        <taxon>Metazoa</taxon>
        <taxon>Ecdysozoa</taxon>
        <taxon>Arthropoda</taxon>
        <taxon>Hexapoda</taxon>
        <taxon>Insecta</taxon>
        <taxon>Pterygota</taxon>
        <taxon>Neoptera</taxon>
        <taxon>Endopterygota</taxon>
        <taxon>Lepidoptera</taxon>
        <taxon>Glossata</taxon>
        <taxon>Ditrysia</taxon>
        <taxon>Bombycoidea</taxon>
        <taxon>Sphingidae</taxon>
        <taxon>Sphinginae</taxon>
        <taxon>Sphingini</taxon>
        <taxon>Manduca</taxon>
    </lineage>
</organism>
<reference key="1">
    <citation type="submission" date="1998-04" db="EMBL/GenBank/DDBJ databases">
        <authorList>
            <person name="Scholz F.R."/>
            <person name="Trenczek T."/>
            <person name="Kanost M.R."/>
        </authorList>
    </citation>
    <scope>NUCLEOTIDE SEQUENCE [MRNA]</scope>
    <source>
        <tissue>Fat body</tissue>
    </source>
</reference>